<gene>
    <name evidence="1" type="primary">slyX</name>
    <name type="ordered locus">YE3936</name>
</gene>
<dbReference type="EMBL" id="AM286415">
    <property type="protein sequence ID" value="CAL13955.1"/>
    <property type="molecule type" value="Genomic_DNA"/>
</dbReference>
<dbReference type="RefSeq" id="WP_011817324.1">
    <property type="nucleotide sequence ID" value="NC_008800.1"/>
</dbReference>
<dbReference type="RefSeq" id="YP_001008081.1">
    <property type="nucleotide sequence ID" value="NC_008800.1"/>
</dbReference>
<dbReference type="SMR" id="A1JS64"/>
<dbReference type="KEGG" id="yen:YE3936"/>
<dbReference type="PATRIC" id="fig|393305.7.peg.4186"/>
<dbReference type="eggNOG" id="COG2900">
    <property type="taxonomic scope" value="Bacteria"/>
</dbReference>
<dbReference type="HOGENOM" id="CLU_180796_4_2_6"/>
<dbReference type="OrthoDB" id="5771733at2"/>
<dbReference type="Proteomes" id="UP000000642">
    <property type="component" value="Chromosome"/>
</dbReference>
<dbReference type="Gene3D" id="1.20.5.300">
    <property type="match status" value="1"/>
</dbReference>
<dbReference type="HAMAP" id="MF_00715">
    <property type="entry name" value="SlyX"/>
    <property type="match status" value="1"/>
</dbReference>
<dbReference type="InterPro" id="IPR007236">
    <property type="entry name" value="SlyX"/>
</dbReference>
<dbReference type="NCBIfam" id="NF002750">
    <property type="entry name" value="PRK02793.1"/>
    <property type="match status" value="1"/>
</dbReference>
<dbReference type="PANTHER" id="PTHR36508">
    <property type="entry name" value="PROTEIN SLYX"/>
    <property type="match status" value="1"/>
</dbReference>
<dbReference type="PANTHER" id="PTHR36508:SF1">
    <property type="entry name" value="PROTEIN SLYX"/>
    <property type="match status" value="1"/>
</dbReference>
<dbReference type="Pfam" id="PF04102">
    <property type="entry name" value="SlyX"/>
    <property type="match status" value="1"/>
</dbReference>
<proteinExistence type="inferred from homology"/>
<feature type="chain" id="PRO_1000045747" description="Protein SlyX">
    <location>
        <begin position="1"/>
        <end position="71"/>
    </location>
</feature>
<feature type="region of interest" description="Disordered" evidence="2">
    <location>
        <begin position="52"/>
        <end position="71"/>
    </location>
</feature>
<name>SLYX_YERE8</name>
<comment type="similarity">
    <text evidence="1">Belongs to the SlyX family.</text>
</comment>
<reference key="1">
    <citation type="journal article" date="2006" name="PLoS Genet.">
        <title>The complete genome sequence and comparative genome analysis of the high pathogenicity Yersinia enterocolitica strain 8081.</title>
        <authorList>
            <person name="Thomson N.R."/>
            <person name="Howard S."/>
            <person name="Wren B.W."/>
            <person name="Holden M.T.G."/>
            <person name="Crossman L."/>
            <person name="Challis G.L."/>
            <person name="Churcher C."/>
            <person name="Mungall K."/>
            <person name="Brooks K."/>
            <person name="Chillingworth T."/>
            <person name="Feltwell T."/>
            <person name="Abdellah Z."/>
            <person name="Hauser H."/>
            <person name="Jagels K."/>
            <person name="Maddison M."/>
            <person name="Moule S."/>
            <person name="Sanders M."/>
            <person name="Whitehead S."/>
            <person name="Quail M.A."/>
            <person name="Dougan G."/>
            <person name="Parkhill J."/>
            <person name="Prentice M.B."/>
        </authorList>
    </citation>
    <scope>NUCLEOTIDE SEQUENCE [LARGE SCALE GENOMIC DNA]</scope>
    <source>
        <strain>NCTC 13174 / 8081</strain>
    </source>
</reference>
<accession>A1JS64</accession>
<sequence>MEQSLFEQRLEMLESRLAFQEVTIEELNLIVTEHQMEMTKLREHLRLLTDKLRESQSSMMASPAEEPPPHY</sequence>
<evidence type="ECO:0000255" key="1">
    <source>
        <dbReference type="HAMAP-Rule" id="MF_00715"/>
    </source>
</evidence>
<evidence type="ECO:0000256" key="2">
    <source>
        <dbReference type="SAM" id="MobiDB-lite"/>
    </source>
</evidence>
<organism>
    <name type="scientific">Yersinia enterocolitica serotype O:8 / biotype 1B (strain NCTC 13174 / 8081)</name>
    <dbReference type="NCBI Taxonomy" id="393305"/>
    <lineage>
        <taxon>Bacteria</taxon>
        <taxon>Pseudomonadati</taxon>
        <taxon>Pseudomonadota</taxon>
        <taxon>Gammaproteobacteria</taxon>
        <taxon>Enterobacterales</taxon>
        <taxon>Yersiniaceae</taxon>
        <taxon>Yersinia</taxon>
    </lineage>
</organism>
<protein>
    <recommendedName>
        <fullName evidence="1">Protein SlyX</fullName>
    </recommendedName>
</protein>